<dbReference type="EMBL" id="U00039">
    <property type="protein sequence ID" value="AAB18498.1"/>
    <property type="molecule type" value="Genomic_DNA"/>
</dbReference>
<dbReference type="EMBL" id="U00096">
    <property type="protein sequence ID" value="AAC76547.1"/>
    <property type="molecule type" value="Genomic_DNA"/>
</dbReference>
<dbReference type="EMBL" id="AP009048">
    <property type="protein sequence ID" value="BAE77772.1"/>
    <property type="molecule type" value="Genomic_DNA"/>
</dbReference>
<dbReference type="PIR" id="S47742">
    <property type="entry name" value="S47742"/>
</dbReference>
<dbReference type="RefSeq" id="NP_417979.1">
    <property type="nucleotide sequence ID" value="NC_000913.3"/>
</dbReference>
<dbReference type="RefSeq" id="WP_000191237.1">
    <property type="nucleotide sequence ID" value="NZ_SSZK01000039.1"/>
</dbReference>
<dbReference type="BioGRID" id="4262161">
    <property type="interactions" value="590"/>
</dbReference>
<dbReference type="DIP" id="DIP-12379N"/>
<dbReference type="FunCoup" id="P37642">
    <property type="interactions" value="141"/>
</dbReference>
<dbReference type="IntAct" id="P37642">
    <property type="interactions" value="2"/>
</dbReference>
<dbReference type="STRING" id="511145.b3522"/>
<dbReference type="TCDB" id="9.B.126.1.1">
    <property type="family name" value="the putative lipid iv exporter (yhjd) family"/>
</dbReference>
<dbReference type="jPOST" id="P37642"/>
<dbReference type="PaxDb" id="511145-b3522"/>
<dbReference type="EnsemblBacteria" id="AAC76547">
    <property type="protein sequence ID" value="AAC76547"/>
    <property type="gene ID" value="b3522"/>
</dbReference>
<dbReference type="GeneID" id="948033"/>
<dbReference type="KEGG" id="ecj:JW3490"/>
<dbReference type="KEGG" id="eco:b3522"/>
<dbReference type="KEGG" id="ecoc:C3026_19080"/>
<dbReference type="PATRIC" id="fig|1411691.4.peg.3196"/>
<dbReference type="EchoBASE" id="EB2159"/>
<dbReference type="eggNOG" id="COG1295">
    <property type="taxonomic scope" value="Bacteria"/>
</dbReference>
<dbReference type="HOGENOM" id="CLU_050028_0_2_6"/>
<dbReference type="InParanoid" id="P37642"/>
<dbReference type="OMA" id="MGNQFGA"/>
<dbReference type="OrthoDB" id="4127374at2"/>
<dbReference type="PhylomeDB" id="P37642"/>
<dbReference type="BioCyc" id="EcoCyc:EG12248-MONOMER"/>
<dbReference type="PRO" id="PR:P37642"/>
<dbReference type="Proteomes" id="UP000000625">
    <property type="component" value="Chromosome"/>
</dbReference>
<dbReference type="GO" id="GO:0005886">
    <property type="term" value="C:plasma membrane"/>
    <property type="evidence" value="ECO:0000314"/>
    <property type="project" value="EcoCyc"/>
</dbReference>
<dbReference type="GO" id="GO:0015920">
    <property type="term" value="P:lipopolysaccharide transport"/>
    <property type="evidence" value="ECO:0000315"/>
    <property type="project" value="EcoCyc"/>
</dbReference>
<dbReference type="InterPro" id="IPR005274">
    <property type="entry name" value="IM_pro_YhjD"/>
</dbReference>
<dbReference type="InterPro" id="IPR017039">
    <property type="entry name" value="Virul_fac_BrkB"/>
</dbReference>
<dbReference type="NCBIfam" id="TIGR00766">
    <property type="entry name" value="inner membrane protein YhjD"/>
    <property type="match status" value="1"/>
</dbReference>
<dbReference type="PANTHER" id="PTHR30213">
    <property type="entry name" value="INNER MEMBRANE PROTEIN YHJD"/>
    <property type="match status" value="1"/>
</dbReference>
<dbReference type="PANTHER" id="PTHR30213:SF1">
    <property type="entry name" value="INNER MEMBRANE PROTEIN YHJD"/>
    <property type="match status" value="1"/>
</dbReference>
<dbReference type="Pfam" id="PF03631">
    <property type="entry name" value="Virul_fac_BrkB"/>
    <property type="match status" value="1"/>
</dbReference>
<dbReference type="PIRSF" id="PIRSF035875">
    <property type="entry name" value="RNase_BN"/>
    <property type="match status" value="1"/>
</dbReference>
<reference key="1">
    <citation type="journal article" date="1994" name="Nucleic Acids Res.">
        <title>Analysis of the Escherichia coli genome. V. DNA sequence of the region from 76.0 to 81.5 minutes.</title>
        <authorList>
            <person name="Sofia H.J."/>
            <person name="Burland V."/>
            <person name="Daniels D.L."/>
            <person name="Plunkett G. III"/>
            <person name="Blattner F.R."/>
        </authorList>
    </citation>
    <scope>NUCLEOTIDE SEQUENCE [LARGE SCALE GENOMIC DNA]</scope>
    <source>
        <strain>K12 / MG1655 / ATCC 47076</strain>
    </source>
</reference>
<reference key="2">
    <citation type="journal article" date="1997" name="Science">
        <title>The complete genome sequence of Escherichia coli K-12.</title>
        <authorList>
            <person name="Blattner F.R."/>
            <person name="Plunkett G. III"/>
            <person name="Bloch C.A."/>
            <person name="Perna N.T."/>
            <person name="Burland V."/>
            <person name="Riley M."/>
            <person name="Collado-Vides J."/>
            <person name="Glasner J.D."/>
            <person name="Rode C.K."/>
            <person name="Mayhew G.F."/>
            <person name="Gregor J."/>
            <person name="Davis N.W."/>
            <person name="Kirkpatrick H.A."/>
            <person name="Goeden M.A."/>
            <person name="Rose D.J."/>
            <person name="Mau B."/>
            <person name="Shao Y."/>
        </authorList>
    </citation>
    <scope>NUCLEOTIDE SEQUENCE [LARGE SCALE GENOMIC DNA]</scope>
    <source>
        <strain>K12 / MG1655 / ATCC 47076</strain>
    </source>
</reference>
<reference key="3">
    <citation type="journal article" date="2006" name="Mol. Syst. Biol.">
        <title>Highly accurate genome sequences of Escherichia coli K-12 strains MG1655 and W3110.</title>
        <authorList>
            <person name="Hayashi K."/>
            <person name="Morooka N."/>
            <person name="Yamamoto Y."/>
            <person name="Fujita K."/>
            <person name="Isono K."/>
            <person name="Choi S."/>
            <person name="Ohtsubo E."/>
            <person name="Baba T."/>
            <person name="Wanner B.L."/>
            <person name="Mori H."/>
            <person name="Horiuchi T."/>
        </authorList>
    </citation>
    <scope>NUCLEOTIDE SEQUENCE [LARGE SCALE GENOMIC DNA]</scope>
    <source>
        <strain>K12 / W3110 / ATCC 27325 / DSM 5911</strain>
    </source>
</reference>
<reference key="4">
    <citation type="journal article" date="2005" name="Science">
        <title>Global topology analysis of the Escherichia coli inner membrane proteome.</title>
        <authorList>
            <person name="Daley D.O."/>
            <person name="Rapp M."/>
            <person name="Granseth E."/>
            <person name="Melen K."/>
            <person name="Drew D."/>
            <person name="von Heijne G."/>
        </authorList>
    </citation>
    <scope>TOPOLOGY [LARGE SCALE ANALYSIS]</scope>
    <source>
        <strain>K12 / MG1655 / ATCC 47076</strain>
    </source>
</reference>
<organism>
    <name type="scientific">Escherichia coli (strain K12)</name>
    <dbReference type="NCBI Taxonomy" id="83333"/>
    <lineage>
        <taxon>Bacteria</taxon>
        <taxon>Pseudomonadati</taxon>
        <taxon>Pseudomonadota</taxon>
        <taxon>Gammaproteobacteria</taxon>
        <taxon>Enterobacterales</taxon>
        <taxon>Enterobacteriaceae</taxon>
        <taxon>Escherichia</taxon>
    </lineage>
</organism>
<proteinExistence type="evidence at protein level"/>
<sequence>MTQENEIKRPIQDLEHEPIKPLDNSEKGSKVSQALETVTTTAEKVQRQPVIAHLIRATERFNDRLGNQFGAAITYFSFLSMIPILMVSFAAGGFVLASHPMLLQDIFDKILQNISDPTLAATLKNTINTAVQQRTTVGLVGLAVALYSGINWMGNLREAIRAQSRDVWERSPQDQEKFWVKYLRDFISLIGLLIALIVTLSITSVAGSAQQMIISALHLNSIEWLKPTWRLIGLAISIFANYLLFFWIFWRLPRHRPRKKALIRGTFLAAIGFEVIKIVMTYTLPSLMKSPSGAAFGSVLGLMAFFYFFARLTLFCAAWIATAEYKDDPRMPGKTQP</sequence>
<protein>
    <recommendedName>
        <fullName>Inner membrane protein YhjD</fullName>
    </recommendedName>
</protein>
<evidence type="ECO:0000255" key="1"/>
<evidence type="ECO:0000256" key="2">
    <source>
        <dbReference type="SAM" id="MobiDB-lite"/>
    </source>
</evidence>
<accession>P37642</accession>
<accession>Q2M7I4</accession>
<feature type="chain" id="PRO_0000169570" description="Inner membrane protein YhjD">
    <location>
        <begin position="1"/>
        <end position="337"/>
    </location>
</feature>
<feature type="topological domain" description="Cytoplasmic" evidence="1">
    <location>
        <begin position="1"/>
        <end position="74"/>
    </location>
</feature>
<feature type="transmembrane region" description="Helical" evidence="1">
    <location>
        <begin position="75"/>
        <end position="97"/>
    </location>
</feature>
<feature type="topological domain" description="Periplasmic" evidence="1">
    <location>
        <begin position="98"/>
        <end position="133"/>
    </location>
</feature>
<feature type="transmembrane region" description="Helical" evidence="1">
    <location>
        <begin position="134"/>
        <end position="156"/>
    </location>
</feature>
<feature type="topological domain" description="Cytoplasmic" evidence="1">
    <location>
        <begin position="157"/>
        <end position="185"/>
    </location>
</feature>
<feature type="transmembrane region" description="Helical" evidence="1">
    <location>
        <begin position="186"/>
        <end position="208"/>
    </location>
</feature>
<feature type="topological domain" description="Periplasmic" evidence="1">
    <location>
        <begin position="209"/>
        <end position="227"/>
    </location>
</feature>
<feature type="transmembrane region" description="Helical" evidence="1">
    <location>
        <begin position="228"/>
        <end position="250"/>
    </location>
</feature>
<feature type="topological domain" description="Cytoplasmic" evidence="1">
    <location>
        <begin position="251"/>
        <end position="261"/>
    </location>
</feature>
<feature type="transmembrane region" description="Helical" evidence="1">
    <location>
        <begin position="262"/>
        <end position="284"/>
    </location>
</feature>
<feature type="topological domain" description="Periplasmic" evidence="1">
    <location>
        <begin position="285"/>
        <end position="298"/>
    </location>
</feature>
<feature type="transmembrane region" description="Helical" evidence="1">
    <location>
        <begin position="299"/>
        <end position="321"/>
    </location>
</feature>
<feature type="topological domain" description="Cytoplasmic" evidence="1">
    <location>
        <begin position="322"/>
        <end position="337"/>
    </location>
</feature>
<feature type="region of interest" description="Disordered" evidence="2">
    <location>
        <begin position="1"/>
        <end position="31"/>
    </location>
</feature>
<feature type="compositionally biased region" description="Basic and acidic residues" evidence="2">
    <location>
        <begin position="1"/>
        <end position="29"/>
    </location>
</feature>
<keyword id="KW-0997">Cell inner membrane</keyword>
<keyword id="KW-1003">Cell membrane</keyword>
<keyword id="KW-0472">Membrane</keyword>
<keyword id="KW-1185">Reference proteome</keyword>
<keyword id="KW-0812">Transmembrane</keyword>
<keyword id="KW-1133">Transmembrane helix</keyword>
<comment type="subcellular location">
    <subcellularLocation>
        <location>Cell inner membrane</location>
        <topology>Multi-pass membrane protein</topology>
    </subcellularLocation>
</comment>
<gene>
    <name type="primary">yhjD</name>
    <name type="ordered locus">b3522</name>
    <name type="ordered locus">JW3490</name>
</gene>
<name>YHJD_ECOLI</name>